<feature type="chain" id="PRO_0000108374" description="Cytochrome c'">
    <location>
        <begin position="1"/>
        <end position="128"/>
    </location>
</feature>
<feature type="binding site" evidence="1 2">
    <location>
        <position position="13"/>
    </location>
    <ligand>
        <name>heme c</name>
        <dbReference type="ChEBI" id="CHEBI:61717"/>
    </ligand>
</feature>
<feature type="binding site" evidence="1 2">
    <location>
        <position position="17"/>
    </location>
    <ligand>
        <name>heme c</name>
        <dbReference type="ChEBI" id="CHEBI:61717"/>
    </ligand>
</feature>
<feature type="binding site" evidence="1 2">
    <location>
        <position position="69"/>
    </location>
    <ligand>
        <name>heme c</name>
        <dbReference type="ChEBI" id="CHEBI:61717"/>
    </ligand>
</feature>
<feature type="binding site" evidence="1 2">
    <location>
        <position position="70"/>
    </location>
    <ligand>
        <name>heme c</name>
        <dbReference type="ChEBI" id="CHEBI:61717"/>
    </ligand>
</feature>
<feature type="binding site" description="covalent" evidence="1 2">
    <location>
        <position position="118"/>
    </location>
    <ligand>
        <name>heme c</name>
        <dbReference type="ChEBI" id="CHEBI:61717"/>
    </ligand>
</feature>
<feature type="binding site" description="covalent" evidence="1 2">
    <location>
        <position position="121"/>
    </location>
    <ligand>
        <name>heme c</name>
        <dbReference type="ChEBI" id="CHEBI:61717"/>
    </ligand>
</feature>
<feature type="binding site" description="axial binding residue" evidence="1 2">
    <location>
        <position position="122"/>
    </location>
    <ligand>
        <name>heme c</name>
        <dbReference type="ChEBI" id="CHEBI:61717"/>
    </ligand>
    <ligandPart>
        <name>Fe</name>
        <dbReference type="ChEBI" id="CHEBI:18248"/>
    </ligandPart>
</feature>
<feature type="helix" evidence="3">
    <location>
        <begin position="5"/>
        <end position="30"/>
    </location>
</feature>
<feature type="helix" evidence="3">
    <location>
        <begin position="40"/>
        <end position="53"/>
    </location>
</feature>
<feature type="helix" evidence="3">
    <location>
        <begin position="54"/>
        <end position="58"/>
    </location>
</feature>
<feature type="helix" evidence="3">
    <location>
        <begin position="72"/>
        <end position="75"/>
    </location>
</feature>
<feature type="turn" evidence="3">
    <location>
        <begin position="76"/>
        <end position="78"/>
    </location>
</feature>
<feature type="helix" evidence="3">
    <location>
        <begin position="79"/>
        <end position="102"/>
    </location>
</feature>
<feature type="helix" evidence="3">
    <location>
        <begin position="104"/>
        <end position="125"/>
    </location>
</feature>
<protein>
    <recommendedName>
        <fullName>Cytochrome c'</fullName>
    </recommendedName>
</protein>
<evidence type="ECO:0000269" key="1">
    <source>
    </source>
</evidence>
<evidence type="ECO:0007744" key="2">
    <source>
        <dbReference type="PDB" id="2CCY"/>
    </source>
</evidence>
<evidence type="ECO:0007829" key="3">
    <source>
        <dbReference type="PDB" id="2CCY"/>
    </source>
</evidence>
<dbReference type="PIR" id="A00145">
    <property type="entry name" value="CCQFCM"/>
</dbReference>
<dbReference type="PDB" id="2CCY">
    <property type="method" value="X-ray"/>
    <property type="resolution" value="1.67 A"/>
    <property type="chains" value="A/B=1-128"/>
</dbReference>
<dbReference type="PDBsum" id="2CCY"/>
<dbReference type="SMR" id="P00152"/>
<dbReference type="EvolutionaryTrace" id="P00152"/>
<dbReference type="GO" id="GO:0042597">
    <property type="term" value="C:periplasmic space"/>
    <property type="evidence" value="ECO:0007669"/>
    <property type="project" value="InterPro"/>
</dbReference>
<dbReference type="GO" id="GO:0009055">
    <property type="term" value="F:electron transfer activity"/>
    <property type="evidence" value="ECO:0007669"/>
    <property type="project" value="InterPro"/>
</dbReference>
<dbReference type="GO" id="GO:0020037">
    <property type="term" value="F:heme binding"/>
    <property type="evidence" value="ECO:0007669"/>
    <property type="project" value="InterPro"/>
</dbReference>
<dbReference type="GO" id="GO:0005506">
    <property type="term" value="F:iron ion binding"/>
    <property type="evidence" value="ECO:0007669"/>
    <property type="project" value="InterPro"/>
</dbReference>
<dbReference type="GO" id="GO:0022900">
    <property type="term" value="P:electron transport chain"/>
    <property type="evidence" value="ECO:0007669"/>
    <property type="project" value="InterPro"/>
</dbReference>
<dbReference type="Gene3D" id="1.20.120.10">
    <property type="entry name" value="Cytochrome c/b562"/>
    <property type="match status" value="1"/>
</dbReference>
<dbReference type="InterPro" id="IPR010980">
    <property type="entry name" value="Cyt_c/b562"/>
</dbReference>
<dbReference type="InterPro" id="IPR002321">
    <property type="entry name" value="Cyt_c_II"/>
</dbReference>
<dbReference type="InterPro" id="IPR012127">
    <property type="entry name" value="Cyt_c_prime"/>
</dbReference>
<dbReference type="InterPro" id="IPR015984">
    <property type="entry name" value="Cyt_c_prime_subgr"/>
</dbReference>
<dbReference type="Pfam" id="PF01322">
    <property type="entry name" value="Cytochrom_C_2"/>
    <property type="match status" value="1"/>
</dbReference>
<dbReference type="PIRSF" id="PIRSF000027">
    <property type="entry name" value="Cytc_c_prime"/>
    <property type="match status" value="1"/>
</dbReference>
<dbReference type="PRINTS" id="PR00608">
    <property type="entry name" value="CYTCHROMECII"/>
</dbReference>
<dbReference type="SUPFAM" id="SSF47175">
    <property type="entry name" value="Cytochromes"/>
    <property type="match status" value="1"/>
</dbReference>
<dbReference type="PROSITE" id="PS51009">
    <property type="entry name" value="CYTCII"/>
    <property type="match status" value="1"/>
</dbReference>
<sequence length="128" mass="13421">QQSKPEDLLKLRQGLMQTLKSQWVPIAGFAAGKADLPADAAQRAENMAMVAKLAPIGWAKGTEALPNGETKPEAFGSKSAEFLEGWKALATESTKLAAAAKAGPDALKAQAAATGKVCKACHEEFKQD</sequence>
<name>CYCP_MAGML</name>
<keyword id="KW-0002">3D-structure</keyword>
<keyword id="KW-0903">Direct protein sequencing</keyword>
<keyword id="KW-0249">Electron transport</keyword>
<keyword id="KW-0349">Heme</keyword>
<keyword id="KW-0408">Iron</keyword>
<keyword id="KW-0479">Metal-binding</keyword>
<keyword id="KW-0813">Transport</keyword>
<reference key="1">
    <citation type="book" date="1979" name="Abstracts of the 3rd international symposium on photosynthetic prokaryotes (Oxford)">
        <editorList>
            <person name="Nichols J.M."/>
        </editorList>
        <authorList>
            <person name="Ambler R.P."/>
        </authorList>
    </citation>
    <scope>PROTEIN SEQUENCE</scope>
</reference>
<reference key="2">
    <citation type="journal article" date="1981" name="J. Mol. Biol.">
        <title>Crystallographic structure of Rhodospirillum molischianum ferricytochrome c' at 2.5-A resolution.</title>
        <authorList>
            <person name="Weber P.C."/>
            <person name="Howard A."/>
            <person name="Xuong N.H."/>
            <person name="Salemme F.R."/>
        </authorList>
    </citation>
    <scope>X-RAY CRYSTALLOGRAPHY (2.5 ANGSTROMS)</scope>
</reference>
<reference evidence="2" key="3">
    <citation type="journal article" date="1985" name="J. Mol. Biol.">
        <title>Structure of ferricytochrome c' from Rhodospirillum molischianum at 1.67-A resolution.</title>
        <authorList>
            <person name="Finzel B.C."/>
            <person name="Weber P.C."/>
            <person name="Hardman K.D."/>
            <person name="Salemme F.R."/>
        </authorList>
    </citation>
    <scope>X-RAY CRYSTALLOGRAPHY (1.67 ANGSTROMS) IN COMPLEX WITH HEME C</scope>
</reference>
<accession>P00152</accession>
<comment type="function">
    <text>Cytochrome c' is the most widely occurring bacterial c-type cytochrome. Cytochromes c' are high-spin proteins and the heme has no sixth ligand. Their exact function is not known.</text>
</comment>
<comment type="subunit">
    <text>Homodimer.</text>
</comment>
<comment type="PTM">
    <text evidence="1">Binds 1 heme c group covalently per subunit.</text>
</comment>
<proteinExistence type="evidence at protein level"/>
<organism>
    <name type="scientific">Magnetospirillum molischianum</name>
    <name type="common">Rhodospirillum molischianum</name>
    <dbReference type="NCBI Taxonomy" id="1083"/>
    <lineage>
        <taxon>Bacteria</taxon>
        <taxon>Pseudomonadati</taxon>
        <taxon>Pseudomonadota</taxon>
        <taxon>Alphaproteobacteria</taxon>
        <taxon>Rhodospirillales</taxon>
        <taxon>Rhodospirillaceae</taxon>
        <taxon>Magnetospirillum</taxon>
    </lineage>
</organism>